<proteinExistence type="inferred from homology"/>
<evidence type="ECO:0000250" key="1"/>
<evidence type="ECO:0000255" key="2">
    <source>
        <dbReference type="HAMAP-Rule" id="MF_00118"/>
    </source>
</evidence>
<gene>
    <name evidence="2" type="primary">tuf</name>
    <name type="ordered locus">SUN_0123</name>
</gene>
<accession>A6Q6H4</accession>
<reference key="1">
    <citation type="journal article" date="2007" name="Proc. Natl. Acad. Sci. U.S.A.">
        <title>Deep-sea vent epsilon-proteobacterial genomes provide insights into emergence of pathogens.</title>
        <authorList>
            <person name="Nakagawa S."/>
            <person name="Takaki Y."/>
            <person name="Shimamura S."/>
            <person name="Reysenbach A.-L."/>
            <person name="Takai K."/>
            <person name="Horikoshi K."/>
        </authorList>
    </citation>
    <scope>NUCLEOTIDE SEQUENCE [LARGE SCALE GENOMIC DNA]</scope>
    <source>
        <strain>NBC37-1</strain>
    </source>
</reference>
<protein>
    <recommendedName>
        <fullName evidence="2">Elongation factor Tu</fullName>
        <shortName evidence="2">EF-Tu</shortName>
        <ecNumber evidence="2">3.6.5.3</ecNumber>
    </recommendedName>
</protein>
<comment type="function">
    <text evidence="2">GTP hydrolase that promotes the GTP-dependent binding of aminoacyl-tRNA to the A-site of ribosomes during protein biosynthesis.</text>
</comment>
<comment type="catalytic activity">
    <reaction evidence="2">
        <text>GTP + H2O = GDP + phosphate + H(+)</text>
        <dbReference type="Rhea" id="RHEA:19669"/>
        <dbReference type="ChEBI" id="CHEBI:15377"/>
        <dbReference type="ChEBI" id="CHEBI:15378"/>
        <dbReference type="ChEBI" id="CHEBI:37565"/>
        <dbReference type="ChEBI" id="CHEBI:43474"/>
        <dbReference type="ChEBI" id="CHEBI:58189"/>
        <dbReference type="EC" id="3.6.5.3"/>
    </reaction>
    <physiologicalReaction direction="left-to-right" evidence="2">
        <dbReference type="Rhea" id="RHEA:19670"/>
    </physiologicalReaction>
</comment>
<comment type="subunit">
    <text evidence="2">Monomer.</text>
</comment>
<comment type="subcellular location">
    <subcellularLocation>
        <location evidence="2">Cytoplasm</location>
    </subcellularLocation>
</comment>
<comment type="similarity">
    <text evidence="2">Belongs to the TRAFAC class translation factor GTPase superfamily. Classic translation factor GTPase family. EF-Tu/EF-1A subfamily.</text>
</comment>
<organism>
    <name type="scientific">Sulfurovum sp. (strain NBC37-1)</name>
    <dbReference type="NCBI Taxonomy" id="387093"/>
    <lineage>
        <taxon>Bacteria</taxon>
        <taxon>Pseudomonadati</taxon>
        <taxon>Campylobacterota</taxon>
        <taxon>Epsilonproteobacteria</taxon>
        <taxon>Campylobacterales</taxon>
        <taxon>Sulfurovaceae</taxon>
        <taxon>Sulfurovum</taxon>
    </lineage>
</organism>
<sequence>MAKEKFERTKPHINIGTIGHVDHGKTTLTAAITAVLAVAGDTELMDYDAIDNAPEERERGITIATSHVEYETATRHYAHVDCPGHADYVKNMITGAAQMDGAILVIAATDGPMAQTREHILLSKQVGVPYIVVFLNKEDQLDDEDKEEMLELVEMEVRELLSEYDFPGDDTPIVAGSAFQALEEAKTGTLGEWSAKIMELMDAVDEYIPEPKRETDKDFLMAIEDIFTIQGRGTVVTGKVDRGQVCVGDEVEIVGLKDTQKTTVTGVEMFRKEMDCGIAGDNCGVLIRGIDKEAVQRGMVLCKPGSITPHTQFEAEVYVLTKEEGGRHTPFFDNYRPQFYVRTTDVTGSVKLQEGTEMVMPGDNVKINVELIAPIALDEGTRFAIREGGRTVGAGVVSKIIA</sequence>
<name>EFTU_SULNB</name>
<keyword id="KW-0963">Cytoplasm</keyword>
<keyword id="KW-0251">Elongation factor</keyword>
<keyword id="KW-0342">GTP-binding</keyword>
<keyword id="KW-0378">Hydrolase</keyword>
<keyword id="KW-0460">Magnesium</keyword>
<keyword id="KW-0479">Metal-binding</keyword>
<keyword id="KW-0547">Nucleotide-binding</keyword>
<keyword id="KW-0648">Protein biosynthesis</keyword>
<feature type="chain" id="PRO_1000015764" description="Elongation factor Tu">
    <location>
        <begin position="1"/>
        <end position="402"/>
    </location>
</feature>
<feature type="domain" description="tr-type G">
    <location>
        <begin position="10"/>
        <end position="212"/>
    </location>
</feature>
<feature type="region of interest" description="G1" evidence="1">
    <location>
        <begin position="19"/>
        <end position="26"/>
    </location>
</feature>
<feature type="region of interest" description="G2" evidence="1">
    <location>
        <begin position="60"/>
        <end position="64"/>
    </location>
</feature>
<feature type="region of interest" description="G3" evidence="1">
    <location>
        <begin position="81"/>
        <end position="84"/>
    </location>
</feature>
<feature type="region of interest" description="G4" evidence="1">
    <location>
        <begin position="136"/>
        <end position="139"/>
    </location>
</feature>
<feature type="region of interest" description="G5" evidence="1">
    <location>
        <begin position="177"/>
        <end position="179"/>
    </location>
</feature>
<feature type="binding site" evidence="2">
    <location>
        <begin position="19"/>
        <end position="26"/>
    </location>
    <ligand>
        <name>GTP</name>
        <dbReference type="ChEBI" id="CHEBI:37565"/>
    </ligand>
</feature>
<feature type="binding site" evidence="2">
    <location>
        <position position="26"/>
    </location>
    <ligand>
        <name>Mg(2+)</name>
        <dbReference type="ChEBI" id="CHEBI:18420"/>
    </ligand>
</feature>
<feature type="binding site" evidence="2">
    <location>
        <begin position="81"/>
        <end position="85"/>
    </location>
    <ligand>
        <name>GTP</name>
        <dbReference type="ChEBI" id="CHEBI:37565"/>
    </ligand>
</feature>
<feature type="binding site" evidence="2">
    <location>
        <begin position="136"/>
        <end position="139"/>
    </location>
    <ligand>
        <name>GTP</name>
        <dbReference type="ChEBI" id="CHEBI:37565"/>
    </ligand>
</feature>
<dbReference type="EC" id="3.6.5.3" evidence="2"/>
<dbReference type="EMBL" id="AP009179">
    <property type="protein sequence ID" value="BAF71083.1"/>
    <property type="molecule type" value="Genomic_DNA"/>
</dbReference>
<dbReference type="RefSeq" id="WP_011979816.1">
    <property type="nucleotide sequence ID" value="NC_009663.1"/>
</dbReference>
<dbReference type="SMR" id="A6Q6H4"/>
<dbReference type="STRING" id="387093.SUN_0123"/>
<dbReference type="KEGG" id="sun:SUN_0123"/>
<dbReference type="eggNOG" id="COG0050">
    <property type="taxonomic scope" value="Bacteria"/>
</dbReference>
<dbReference type="HOGENOM" id="CLU_007265_0_0_7"/>
<dbReference type="OrthoDB" id="9803139at2"/>
<dbReference type="Proteomes" id="UP000006378">
    <property type="component" value="Chromosome"/>
</dbReference>
<dbReference type="GO" id="GO:0005829">
    <property type="term" value="C:cytosol"/>
    <property type="evidence" value="ECO:0007669"/>
    <property type="project" value="TreeGrafter"/>
</dbReference>
<dbReference type="GO" id="GO:0005525">
    <property type="term" value="F:GTP binding"/>
    <property type="evidence" value="ECO:0007669"/>
    <property type="project" value="UniProtKB-UniRule"/>
</dbReference>
<dbReference type="GO" id="GO:0003924">
    <property type="term" value="F:GTPase activity"/>
    <property type="evidence" value="ECO:0007669"/>
    <property type="project" value="InterPro"/>
</dbReference>
<dbReference type="GO" id="GO:0003746">
    <property type="term" value="F:translation elongation factor activity"/>
    <property type="evidence" value="ECO:0007669"/>
    <property type="project" value="UniProtKB-UniRule"/>
</dbReference>
<dbReference type="CDD" id="cd01884">
    <property type="entry name" value="EF_Tu"/>
    <property type="match status" value="1"/>
</dbReference>
<dbReference type="CDD" id="cd03697">
    <property type="entry name" value="EFTU_II"/>
    <property type="match status" value="1"/>
</dbReference>
<dbReference type="CDD" id="cd03707">
    <property type="entry name" value="EFTU_III"/>
    <property type="match status" value="1"/>
</dbReference>
<dbReference type="FunFam" id="2.40.30.10:FF:000001">
    <property type="entry name" value="Elongation factor Tu"/>
    <property type="match status" value="1"/>
</dbReference>
<dbReference type="FunFam" id="3.40.50.300:FF:000003">
    <property type="entry name" value="Elongation factor Tu"/>
    <property type="match status" value="1"/>
</dbReference>
<dbReference type="Gene3D" id="3.40.50.300">
    <property type="entry name" value="P-loop containing nucleotide triphosphate hydrolases"/>
    <property type="match status" value="1"/>
</dbReference>
<dbReference type="Gene3D" id="2.40.30.10">
    <property type="entry name" value="Translation factors"/>
    <property type="match status" value="2"/>
</dbReference>
<dbReference type="HAMAP" id="MF_00118_B">
    <property type="entry name" value="EF_Tu_B"/>
    <property type="match status" value="1"/>
</dbReference>
<dbReference type="InterPro" id="IPR041709">
    <property type="entry name" value="EF-Tu_GTP-bd"/>
</dbReference>
<dbReference type="InterPro" id="IPR050055">
    <property type="entry name" value="EF-Tu_GTPase"/>
</dbReference>
<dbReference type="InterPro" id="IPR004161">
    <property type="entry name" value="EFTu-like_2"/>
</dbReference>
<dbReference type="InterPro" id="IPR033720">
    <property type="entry name" value="EFTU_2"/>
</dbReference>
<dbReference type="InterPro" id="IPR031157">
    <property type="entry name" value="G_TR_CS"/>
</dbReference>
<dbReference type="InterPro" id="IPR027417">
    <property type="entry name" value="P-loop_NTPase"/>
</dbReference>
<dbReference type="InterPro" id="IPR005225">
    <property type="entry name" value="Small_GTP-bd"/>
</dbReference>
<dbReference type="InterPro" id="IPR000795">
    <property type="entry name" value="T_Tr_GTP-bd_dom"/>
</dbReference>
<dbReference type="InterPro" id="IPR009000">
    <property type="entry name" value="Transl_B-barrel_sf"/>
</dbReference>
<dbReference type="InterPro" id="IPR009001">
    <property type="entry name" value="Transl_elong_EF1A/Init_IF2_C"/>
</dbReference>
<dbReference type="InterPro" id="IPR004541">
    <property type="entry name" value="Transl_elong_EFTu/EF1A_bac/org"/>
</dbReference>
<dbReference type="InterPro" id="IPR004160">
    <property type="entry name" value="Transl_elong_EFTu/EF1A_C"/>
</dbReference>
<dbReference type="NCBIfam" id="TIGR00485">
    <property type="entry name" value="EF-Tu"/>
    <property type="match status" value="1"/>
</dbReference>
<dbReference type="NCBIfam" id="NF000766">
    <property type="entry name" value="PRK00049.1"/>
    <property type="match status" value="1"/>
</dbReference>
<dbReference type="NCBIfam" id="NF009372">
    <property type="entry name" value="PRK12735.1"/>
    <property type="match status" value="1"/>
</dbReference>
<dbReference type="NCBIfam" id="NF009373">
    <property type="entry name" value="PRK12736.1"/>
    <property type="match status" value="1"/>
</dbReference>
<dbReference type="NCBIfam" id="TIGR00231">
    <property type="entry name" value="small_GTP"/>
    <property type="match status" value="1"/>
</dbReference>
<dbReference type="PANTHER" id="PTHR43721:SF22">
    <property type="entry name" value="ELONGATION FACTOR TU, MITOCHONDRIAL"/>
    <property type="match status" value="1"/>
</dbReference>
<dbReference type="PANTHER" id="PTHR43721">
    <property type="entry name" value="ELONGATION FACTOR TU-RELATED"/>
    <property type="match status" value="1"/>
</dbReference>
<dbReference type="Pfam" id="PF00009">
    <property type="entry name" value="GTP_EFTU"/>
    <property type="match status" value="1"/>
</dbReference>
<dbReference type="Pfam" id="PF03144">
    <property type="entry name" value="GTP_EFTU_D2"/>
    <property type="match status" value="1"/>
</dbReference>
<dbReference type="Pfam" id="PF03143">
    <property type="entry name" value="GTP_EFTU_D3"/>
    <property type="match status" value="1"/>
</dbReference>
<dbReference type="PRINTS" id="PR00315">
    <property type="entry name" value="ELONGATNFCT"/>
</dbReference>
<dbReference type="SUPFAM" id="SSF50465">
    <property type="entry name" value="EF-Tu/eEF-1alpha/eIF2-gamma C-terminal domain"/>
    <property type="match status" value="1"/>
</dbReference>
<dbReference type="SUPFAM" id="SSF52540">
    <property type="entry name" value="P-loop containing nucleoside triphosphate hydrolases"/>
    <property type="match status" value="1"/>
</dbReference>
<dbReference type="SUPFAM" id="SSF50447">
    <property type="entry name" value="Translation proteins"/>
    <property type="match status" value="1"/>
</dbReference>
<dbReference type="PROSITE" id="PS00301">
    <property type="entry name" value="G_TR_1"/>
    <property type="match status" value="1"/>
</dbReference>
<dbReference type="PROSITE" id="PS51722">
    <property type="entry name" value="G_TR_2"/>
    <property type="match status" value="1"/>
</dbReference>